<accession>C0R4F9</accession>
<evidence type="ECO:0000255" key="1">
    <source>
        <dbReference type="HAMAP-Rule" id="MF_00171"/>
    </source>
</evidence>
<feature type="chain" id="PRO_1000194581" description="tRNA pseudouridine synthase A">
    <location>
        <begin position="1"/>
        <end position="245"/>
    </location>
</feature>
<feature type="active site" description="Nucleophile" evidence="1">
    <location>
        <position position="52"/>
    </location>
</feature>
<feature type="binding site" evidence="1">
    <location>
        <position position="111"/>
    </location>
    <ligand>
        <name>substrate</name>
    </ligand>
</feature>
<gene>
    <name evidence="1" type="primary">truA</name>
    <name type="ordered locus">WRi_011040</name>
</gene>
<reference key="1">
    <citation type="journal article" date="2009" name="Proc. Natl. Acad. Sci. U.S.A.">
        <title>The mosaic genome structure of the Wolbachia wRi strain infecting Drosophila simulans.</title>
        <authorList>
            <person name="Klasson L."/>
            <person name="Westberg J."/>
            <person name="Sapountzis P."/>
            <person name="Naeslund K."/>
            <person name="Lutnaes Y."/>
            <person name="Darby A.C."/>
            <person name="Veneti Z."/>
            <person name="Chen L."/>
            <person name="Braig H.R."/>
            <person name="Garrett R."/>
            <person name="Bourtzis K."/>
            <person name="Andersson S.G."/>
        </authorList>
    </citation>
    <scope>NUCLEOTIDE SEQUENCE [LARGE SCALE GENOMIC DNA]</scope>
    <source>
        <strain>wRi</strain>
    </source>
</reference>
<proteinExistence type="inferred from homology"/>
<dbReference type="EC" id="5.4.99.12" evidence="1"/>
<dbReference type="EMBL" id="CP001391">
    <property type="protein sequence ID" value="ACN95801.1"/>
    <property type="molecule type" value="Genomic_DNA"/>
</dbReference>
<dbReference type="RefSeq" id="WP_012673356.1">
    <property type="nucleotide sequence ID" value="NZ_MKIF01000067.1"/>
</dbReference>
<dbReference type="SMR" id="C0R4F9"/>
<dbReference type="STRING" id="66084.WRi_011040"/>
<dbReference type="KEGG" id="wri:WRi_011040"/>
<dbReference type="HOGENOM" id="CLU_014673_0_2_5"/>
<dbReference type="Proteomes" id="UP000001293">
    <property type="component" value="Chromosome"/>
</dbReference>
<dbReference type="GO" id="GO:0003723">
    <property type="term" value="F:RNA binding"/>
    <property type="evidence" value="ECO:0007669"/>
    <property type="project" value="InterPro"/>
</dbReference>
<dbReference type="GO" id="GO:0160147">
    <property type="term" value="F:tRNA pseudouridine(38-40) synthase activity"/>
    <property type="evidence" value="ECO:0007669"/>
    <property type="project" value="UniProtKB-EC"/>
</dbReference>
<dbReference type="GO" id="GO:0031119">
    <property type="term" value="P:tRNA pseudouridine synthesis"/>
    <property type="evidence" value="ECO:0007669"/>
    <property type="project" value="UniProtKB-UniRule"/>
</dbReference>
<dbReference type="CDD" id="cd02570">
    <property type="entry name" value="PseudoU_synth_EcTruA"/>
    <property type="match status" value="1"/>
</dbReference>
<dbReference type="FunFam" id="3.30.70.580:FF:000001">
    <property type="entry name" value="tRNA pseudouridine synthase A"/>
    <property type="match status" value="1"/>
</dbReference>
<dbReference type="Gene3D" id="3.30.70.660">
    <property type="entry name" value="Pseudouridine synthase I, catalytic domain, C-terminal subdomain"/>
    <property type="match status" value="1"/>
</dbReference>
<dbReference type="Gene3D" id="3.30.70.580">
    <property type="entry name" value="Pseudouridine synthase I, catalytic domain, N-terminal subdomain"/>
    <property type="match status" value="1"/>
</dbReference>
<dbReference type="HAMAP" id="MF_00171">
    <property type="entry name" value="TruA"/>
    <property type="match status" value="1"/>
</dbReference>
<dbReference type="InterPro" id="IPR020103">
    <property type="entry name" value="PsdUridine_synth_cat_dom_sf"/>
</dbReference>
<dbReference type="InterPro" id="IPR001406">
    <property type="entry name" value="PsdUridine_synth_TruA"/>
</dbReference>
<dbReference type="InterPro" id="IPR020097">
    <property type="entry name" value="PsdUridine_synth_TruA_a/b_dom"/>
</dbReference>
<dbReference type="InterPro" id="IPR020095">
    <property type="entry name" value="PsdUridine_synth_TruA_C"/>
</dbReference>
<dbReference type="InterPro" id="IPR020094">
    <property type="entry name" value="TruA/RsuA/RluB/E/F_N"/>
</dbReference>
<dbReference type="NCBIfam" id="TIGR00071">
    <property type="entry name" value="hisT_truA"/>
    <property type="match status" value="1"/>
</dbReference>
<dbReference type="PANTHER" id="PTHR11142">
    <property type="entry name" value="PSEUDOURIDYLATE SYNTHASE"/>
    <property type="match status" value="1"/>
</dbReference>
<dbReference type="PANTHER" id="PTHR11142:SF0">
    <property type="entry name" value="TRNA PSEUDOURIDINE SYNTHASE-LIKE 1"/>
    <property type="match status" value="1"/>
</dbReference>
<dbReference type="Pfam" id="PF01416">
    <property type="entry name" value="PseudoU_synth_1"/>
    <property type="match status" value="2"/>
</dbReference>
<dbReference type="PIRSF" id="PIRSF001430">
    <property type="entry name" value="tRNA_psdUrid_synth"/>
    <property type="match status" value="1"/>
</dbReference>
<dbReference type="SUPFAM" id="SSF55120">
    <property type="entry name" value="Pseudouridine synthase"/>
    <property type="match status" value="1"/>
</dbReference>
<name>TRUA_WOLWR</name>
<organism>
    <name type="scientific">Wolbachia sp. subsp. Drosophila simulans (strain wRi)</name>
    <dbReference type="NCBI Taxonomy" id="66084"/>
    <lineage>
        <taxon>Bacteria</taxon>
        <taxon>Pseudomonadati</taxon>
        <taxon>Pseudomonadota</taxon>
        <taxon>Alphaproteobacteria</taxon>
        <taxon>Rickettsiales</taxon>
        <taxon>Anaplasmataceae</taxon>
        <taxon>Wolbachieae</taxon>
        <taxon>Wolbachia</taxon>
    </lineage>
</organism>
<keyword id="KW-0413">Isomerase</keyword>
<keyword id="KW-0819">tRNA processing</keyword>
<protein>
    <recommendedName>
        <fullName evidence="1">tRNA pseudouridine synthase A</fullName>
        <ecNumber evidence="1">5.4.99.12</ecNumber>
    </recommendedName>
    <alternativeName>
        <fullName evidence="1">tRNA pseudouridine(38-40) synthase</fullName>
    </alternativeName>
    <alternativeName>
        <fullName evidence="1">tRNA pseudouridylate synthase I</fullName>
    </alternativeName>
    <alternativeName>
        <fullName evidence="1">tRNA-uridine isomerase I</fullName>
    </alternativeName>
</protein>
<sequence length="245" mass="27811">MRYKITVEYNGSSFSGWQKQQHSANSIQEKIENAIFNFSGEKIALYCGGRTDAGVHALGQVAHFDMEKECELYRIRNAINYHLKSIPIVVLNAEVVDDAFHARFSAKKRYYEYRIVNRYAPAALETGYVWQVFSPLDVNIMREAAKHLLGKHDLSSFRSKDCHAANPIRTIDDIDIVQNGNHIHIKISAISFLHNQVRIIAGTLVEFGKNRTNPQEMLHILSQCKRSAAGVTAPPFGLYLVKIDY</sequence>
<comment type="function">
    <text evidence="1">Formation of pseudouridine at positions 38, 39 and 40 in the anticodon stem and loop of transfer RNAs.</text>
</comment>
<comment type="catalytic activity">
    <reaction evidence="1">
        <text>uridine(38/39/40) in tRNA = pseudouridine(38/39/40) in tRNA</text>
        <dbReference type="Rhea" id="RHEA:22376"/>
        <dbReference type="Rhea" id="RHEA-COMP:10085"/>
        <dbReference type="Rhea" id="RHEA-COMP:10087"/>
        <dbReference type="ChEBI" id="CHEBI:65314"/>
        <dbReference type="ChEBI" id="CHEBI:65315"/>
        <dbReference type="EC" id="5.4.99.12"/>
    </reaction>
</comment>
<comment type="subunit">
    <text evidence="1">Homodimer.</text>
</comment>
<comment type="similarity">
    <text evidence="1">Belongs to the tRNA pseudouridine synthase TruA family.</text>
</comment>